<name>PROB_RHOBA</name>
<accession>Q7UJA8</accession>
<organism>
    <name type="scientific">Rhodopirellula baltica (strain DSM 10527 / NCIMB 13988 / SH1)</name>
    <dbReference type="NCBI Taxonomy" id="243090"/>
    <lineage>
        <taxon>Bacteria</taxon>
        <taxon>Pseudomonadati</taxon>
        <taxon>Planctomycetota</taxon>
        <taxon>Planctomycetia</taxon>
        <taxon>Pirellulales</taxon>
        <taxon>Pirellulaceae</taxon>
        <taxon>Rhodopirellula</taxon>
    </lineage>
</organism>
<keyword id="KW-0028">Amino-acid biosynthesis</keyword>
<keyword id="KW-0067">ATP-binding</keyword>
<keyword id="KW-0963">Cytoplasm</keyword>
<keyword id="KW-0418">Kinase</keyword>
<keyword id="KW-0547">Nucleotide-binding</keyword>
<keyword id="KW-0641">Proline biosynthesis</keyword>
<keyword id="KW-1185">Reference proteome</keyword>
<keyword id="KW-0808">Transferase</keyword>
<feature type="chain" id="PRO_0000109717" description="Glutamate 5-kinase">
    <location>
        <begin position="1"/>
        <end position="389"/>
    </location>
</feature>
<feature type="domain" description="PUA" evidence="1">
    <location>
        <begin position="293"/>
        <end position="371"/>
    </location>
</feature>
<feature type="binding site" evidence="1">
    <location>
        <position position="26"/>
    </location>
    <ligand>
        <name>ATP</name>
        <dbReference type="ChEBI" id="CHEBI:30616"/>
    </ligand>
</feature>
<feature type="binding site" evidence="1">
    <location>
        <position position="66"/>
    </location>
    <ligand>
        <name>substrate</name>
    </ligand>
</feature>
<feature type="binding site" evidence="1">
    <location>
        <position position="153"/>
    </location>
    <ligand>
        <name>substrate</name>
    </ligand>
</feature>
<feature type="binding site" evidence="1">
    <location>
        <position position="167"/>
    </location>
    <ligand>
        <name>substrate</name>
    </ligand>
</feature>
<feature type="binding site" evidence="1">
    <location>
        <begin position="187"/>
        <end position="188"/>
    </location>
    <ligand>
        <name>ATP</name>
        <dbReference type="ChEBI" id="CHEBI:30616"/>
    </ligand>
</feature>
<evidence type="ECO:0000255" key="1">
    <source>
        <dbReference type="HAMAP-Rule" id="MF_00456"/>
    </source>
</evidence>
<proteinExistence type="inferred from homology"/>
<dbReference type="EC" id="2.7.2.11" evidence="1"/>
<dbReference type="EMBL" id="BX294154">
    <property type="protein sequence ID" value="CAD77350.1"/>
    <property type="molecule type" value="Genomic_DNA"/>
</dbReference>
<dbReference type="RefSeq" id="NP_870275.1">
    <property type="nucleotide sequence ID" value="NC_005027.1"/>
</dbReference>
<dbReference type="RefSeq" id="WP_007331575.1">
    <property type="nucleotide sequence ID" value="NC_005027.1"/>
</dbReference>
<dbReference type="SMR" id="Q7UJA8"/>
<dbReference type="FunCoup" id="Q7UJA8">
    <property type="interactions" value="386"/>
</dbReference>
<dbReference type="STRING" id="243090.RB12013"/>
<dbReference type="EnsemblBacteria" id="CAD77350">
    <property type="protein sequence ID" value="CAD77350"/>
    <property type="gene ID" value="RB12013"/>
</dbReference>
<dbReference type="KEGG" id="rba:RB12013"/>
<dbReference type="PATRIC" id="fig|243090.15.peg.5808"/>
<dbReference type="eggNOG" id="COG0263">
    <property type="taxonomic scope" value="Bacteria"/>
</dbReference>
<dbReference type="HOGENOM" id="CLU_025400_2_0_0"/>
<dbReference type="InParanoid" id="Q7UJA8"/>
<dbReference type="OrthoDB" id="9804434at2"/>
<dbReference type="UniPathway" id="UPA00098">
    <property type="reaction ID" value="UER00359"/>
</dbReference>
<dbReference type="Proteomes" id="UP000001025">
    <property type="component" value="Chromosome"/>
</dbReference>
<dbReference type="GO" id="GO:0005829">
    <property type="term" value="C:cytosol"/>
    <property type="evidence" value="ECO:0000318"/>
    <property type="project" value="GO_Central"/>
</dbReference>
<dbReference type="GO" id="GO:0005524">
    <property type="term" value="F:ATP binding"/>
    <property type="evidence" value="ECO:0007669"/>
    <property type="project" value="UniProtKB-KW"/>
</dbReference>
<dbReference type="GO" id="GO:0004349">
    <property type="term" value="F:glutamate 5-kinase activity"/>
    <property type="evidence" value="ECO:0000318"/>
    <property type="project" value="GO_Central"/>
</dbReference>
<dbReference type="GO" id="GO:0003723">
    <property type="term" value="F:RNA binding"/>
    <property type="evidence" value="ECO:0007669"/>
    <property type="project" value="InterPro"/>
</dbReference>
<dbReference type="GO" id="GO:0055129">
    <property type="term" value="P:L-proline biosynthetic process"/>
    <property type="evidence" value="ECO:0007669"/>
    <property type="project" value="UniProtKB-UniRule"/>
</dbReference>
<dbReference type="GO" id="GO:0006561">
    <property type="term" value="P:proline biosynthetic process"/>
    <property type="evidence" value="ECO:0000318"/>
    <property type="project" value="GO_Central"/>
</dbReference>
<dbReference type="CDD" id="cd04242">
    <property type="entry name" value="AAK_G5K_ProB"/>
    <property type="match status" value="1"/>
</dbReference>
<dbReference type="CDD" id="cd21157">
    <property type="entry name" value="PUA_G5K"/>
    <property type="match status" value="1"/>
</dbReference>
<dbReference type="FunFam" id="2.30.130.10:FF:000007">
    <property type="entry name" value="Glutamate 5-kinase"/>
    <property type="match status" value="1"/>
</dbReference>
<dbReference type="FunFam" id="3.40.1160.10:FF:000006">
    <property type="entry name" value="Glutamate 5-kinase"/>
    <property type="match status" value="1"/>
</dbReference>
<dbReference type="Gene3D" id="3.40.1160.10">
    <property type="entry name" value="Acetylglutamate kinase-like"/>
    <property type="match status" value="1"/>
</dbReference>
<dbReference type="Gene3D" id="2.30.130.10">
    <property type="entry name" value="PUA domain"/>
    <property type="match status" value="1"/>
</dbReference>
<dbReference type="HAMAP" id="MF_00456">
    <property type="entry name" value="ProB"/>
    <property type="match status" value="1"/>
</dbReference>
<dbReference type="InterPro" id="IPR036393">
    <property type="entry name" value="AceGlu_kinase-like_sf"/>
</dbReference>
<dbReference type="InterPro" id="IPR001048">
    <property type="entry name" value="Asp/Glu/Uridylate_kinase"/>
</dbReference>
<dbReference type="InterPro" id="IPR041739">
    <property type="entry name" value="G5K_ProB"/>
</dbReference>
<dbReference type="InterPro" id="IPR001057">
    <property type="entry name" value="Glu/AcGlu_kinase"/>
</dbReference>
<dbReference type="InterPro" id="IPR011529">
    <property type="entry name" value="Glu_5kinase"/>
</dbReference>
<dbReference type="InterPro" id="IPR005715">
    <property type="entry name" value="Glu_5kinase/COase_Synthase"/>
</dbReference>
<dbReference type="InterPro" id="IPR019797">
    <property type="entry name" value="Glutamate_5-kinase_CS"/>
</dbReference>
<dbReference type="InterPro" id="IPR002478">
    <property type="entry name" value="PUA"/>
</dbReference>
<dbReference type="InterPro" id="IPR015947">
    <property type="entry name" value="PUA-like_sf"/>
</dbReference>
<dbReference type="InterPro" id="IPR036974">
    <property type="entry name" value="PUA_sf"/>
</dbReference>
<dbReference type="NCBIfam" id="TIGR01027">
    <property type="entry name" value="proB"/>
    <property type="match status" value="1"/>
</dbReference>
<dbReference type="PANTHER" id="PTHR43654">
    <property type="entry name" value="GLUTAMATE 5-KINASE"/>
    <property type="match status" value="1"/>
</dbReference>
<dbReference type="PANTHER" id="PTHR43654:SF1">
    <property type="entry name" value="ISOPENTENYL PHOSPHATE KINASE"/>
    <property type="match status" value="1"/>
</dbReference>
<dbReference type="Pfam" id="PF00696">
    <property type="entry name" value="AA_kinase"/>
    <property type="match status" value="1"/>
</dbReference>
<dbReference type="Pfam" id="PF01472">
    <property type="entry name" value="PUA"/>
    <property type="match status" value="1"/>
</dbReference>
<dbReference type="PIRSF" id="PIRSF000729">
    <property type="entry name" value="GK"/>
    <property type="match status" value="1"/>
</dbReference>
<dbReference type="PRINTS" id="PR00474">
    <property type="entry name" value="GLU5KINASE"/>
</dbReference>
<dbReference type="SMART" id="SM00359">
    <property type="entry name" value="PUA"/>
    <property type="match status" value="1"/>
</dbReference>
<dbReference type="SUPFAM" id="SSF53633">
    <property type="entry name" value="Carbamate kinase-like"/>
    <property type="match status" value="1"/>
</dbReference>
<dbReference type="SUPFAM" id="SSF88697">
    <property type="entry name" value="PUA domain-like"/>
    <property type="match status" value="1"/>
</dbReference>
<dbReference type="PROSITE" id="PS00902">
    <property type="entry name" value="GLUTAMATE_5_KINASE"/>
    <property type="match status" value="1"/>
</dbReference>
<dbReference type="PROSITE" id="PS50890">
    <property type="entry name" value="PUA"/>
    <property type="match status" value="1"/>
</dbReference>
<sequence length="389" mass="42024">MNESSEANDLAIRRQIIDETKCVVVKVGTRVLTTSDGKLDLERVDRLAEQLCRIADTGRQTIMVSSGAVGAGVAKLGLPQRPTDLKSLQAIAAIGQADLIGAYEKSLQKRGRHAAQVLLTRNDLRRRSGYLHVRNALNGIDELGAIAVVNENDSVAVSELKTTFGDNDRLAAQVAGLFNDVMLILLTDVSALYDGHPDEKDSQPIHMVHDVDDGVMALVDDQVSTVSKGGMGGKLRASKLANSHGHPTIIGSGTEEFVLDRIFAGDAVGTLFVPPKRSLKGRRRWIGSSANVAGTLFLDQGAVDAIQKHGRSLLAIGIQRVEGTFAHGNVVRLVGPNGEEFGRGLSNYRSHEVARIAGKPSEQIEWILGHRPYENVIHRNNLVLRIVPE</sequence>
<protein>
    <recommendedName>
        <fullName evidence="1">Glutamate 5-kinase</fullName>
        <ecNumber evidence="1">2.7.2.11</ecNumber>
    </recommendedName>
    <alternativeName>
        <fullName evidence="1">Gamma-glutamyl kinase</fullName>
        <shortName evidence="1">GK</shortName>
    </alternativeName>
</protein>
<reference key="1">
    <citation type="journal article" date="2003" name="Proc. Natl. Acad. Sci. U.S.A.">
        <title>Complete genome sequence of the marine planctomycete Pirellula sp. strain 1.</title>
        <authorList>
            <person name="Gloeckner F.O."/>
            <person name="Kube M."/>
            <person name="Bauer M."/>
            <person name="Teeling H."/>
            <person name="Lombardot T."/>
            <person name="Ludwig W."/>
            <person name="Gade D."/>
            <person name="Beck A."/>
            <person name="Borzym K."/>
            <person name="Heitmann K."/>
            <person name="Rabus R."/>
            <person name="Schlesner H."/>
            <person name="Amann R."/>
            <person name="Reinhardt R."/>
        </authorList>
    </citation>
    <scope>NUCLEOTIDE SEQUENCE [LARGE SCALE GENOMIC DNA]</scope>
    <source>
        <strain>DSM 10527 / NCIMB 13988 / SH1</strain>
    </source>
</reference>
<gene>
    <name evidence="1" type="primary">proB</name>
    <name type="ordered locus">RB12013</name>
</gene>
<comment type="function">
    <text evidence="1">Catalyzes the transfer of a phosphate group to glutamate to form L-glutamate 5-phosphate.</text>
</comment>
<comment type="catalytic activity">
    <reaction evidence="1">
        <text>L-glutamate + ATP = L-glutamyl 5-phosphate + ADP</text>
        <dbReference type="Rhea" id="RHEA:14877"/>
        <dbReference type="ChEBI" id="CHEBI:29985"/>
        <dbReference type="ChEBI" id="CHEBI:30616"/>
        <dbReference type="ChEBI" id="CHEBI:58274"/>
        <dbReference type="ChEBI" id="CHEBI:456216"/>
        <dbReference type="EC" id="2.7.2.11"/>
    </reaction>
</comment>
<comment type="pathway">
    <text evidence="1">Amino-acid biosynthesis; L-proline biosynthesis; L-glutamate 5-semialdehyde from L-glutamate: step 1/2.</text>
</comment>
<comment type="subcellular location">
    <subcellularLocation>
        <location evidence="1">Cytoplasm</location>
    </subcellularLocation>
</comment>
<comment type="similarity">
    <text evidence="1">Belongs to the glutamate 5-kinase family.</text>
</comment>